<comment type="function">
    <text evidence="7 8 9">G protein-coupled receptor for S-geranylgeranyl-glutathione (GGG), an endogenous metabolite present in lymphoid tissues. Couples the binding of GGG to the activation of GNA13 and downstream repression of AKT activation in lymphocytes defining their positioning and growth within lymphoid organs (PubMed:25274307, PubMed:30842656, PubMed:34088745). In lymphoid follicles, confines B cells and follicular helper T cells in germinal centers (GCs) in response to GGG local gradients established by GGT5 (via GGG catabolism) and ABCC1 (via extracellular transport) with lower concentrations of GGG found in the follicular dendritic cell network region around which germinal centers are formed (PubMed:25274307, PubMed:30842656, PubMed:34088745). In the bone marrow, also in response to GGG gradients established by GGT5 and ABCC1, it restricts chemotactic transmigration of B cells, T cells and NK cells from blood vessels to the bone marrow parenchyma (PubMed:30842656, PubMed:34088745). Contributes to GNA13-dependent pathway that suppresses GC B cell growth (PubMed:25274307).</text>
</comment>
<comment type="subcellular location">
    <subcellularLocation>
        <location evidence="7">Cell membrane</location>
        <topology evidence="1">Multi-pass membrane protein</topology>
    </subcellularLocation>
</comment>
<comment type="tissue specificity">
    <text evidence="4 5 8">Barely detectable in normal blood leukocytes. Weaker expression was seen in heart, kidney and lung. Not detected in brain (PubMed:11004484, PubMed:15466006). Expressed in B cells and follicular helper T cells in germinal centers (at protein level) (PubMed:30842656).</text>
</comment>
<comment type="induction">
    <text evidence="4">Down-regulated during granulocytic differentiation.</text>
</comment>
<comment type="miscellaneous">
    <text>The gene coding for this protein is located in the pseudoautosomal region 1 (PAR1) of X and Y chromosomes.</text>
</comment>
<comment type="similarity">
    <text evidence="2">Belongs to the G-protein coupled receptor 1 family.</text>
</comment>
<feature type="chain" id="PRO_0000070031" description="S-geranylgeranyl-glutathione receptor P2RY8">
    <location>
        <begin position="1"/>
        <end position="359"/>
    </location>
</feature>
<feature type="topological domain" description="Extracellular" evidence="1">
    <location>
        <begin position="1"/>
        <end position="19"/>
    </location>
</feature>
<feature type="transmembrane region" description="Helical; Name=1" evidence="1">
    <location>
        <begin position="20"/>
        <end position="40"/>
    </location>
</feature>
<feature type="topological domain" description="Cytoplasmic" evidence="1">
    <location>
        <begin position="41"/>
        <end position="57"/>
    </location>
</feature>
<feature type="transmembrane region" description="Helical; Name=2" evidence="1">
    <location>
        <begin position="58"/>
        <end position="78"/>
    </location>
</feature>
<feature type="topological domain" description="Extracellular" evidence="1">
    <location>
        <begin position="79"/>
        <end position="88"/>
    </location>
</feature>
<feature type="transmembrane region" description="Helical; Name=3" evidence="1">
    <location>
        <begin position="89"/>
        <end position="109"/>
    </location>
</feature>
<feature type="topological domain" description="Cytoplasmic" evidence="1">
    <location>
        <begin position="110"/>
        <end position="138"/>
    </location>
</feature>
<feature type="transmembrane region" description="Helical; Name=4" evidence="1">
    <location>
        <begin position="139"/>
        <end position="159"/>
    </location>
</feature>
<feature type="topological domain" description="Extracellular" evidence="1">
    <location>
        <begin position="160"/>
        <end position="187"/>
    </location>
</feature>
<feature type="transmembrane region" description="Helical; Name=5" evidence="1">
    <location>
        <begin position="188"/>
        <end position="208"/>
    </location>
</feature>
<feature type="topological domain" description="Cytoplasmic" evidence="1">
    <location>
        <begin position="209"/>
        <end position="237"/>
    </location>
</feature>
<feature type="transmembrane region" description="Helical; Name=6" evidence="1">
    <location>
        <begin position="238"/>
        <end position="258"/>
    </location>
</feature>
<feature type="topological domain" description="Extracellular" evidence="1">
    <location>
        <begin position="259"/>
        <end position="275"/>
    </location>
</feature>
<feature type="transmembrane region" description="Helical; Name=7" evidence="1">
    <location>
        <begin position="276"/>
        <end position="296"/>
    </location>
</feature>
<feature type="topological domain" description="Cytoplasmic" evidence="1">
    <location>
        <begin position="297"/>
        <end position="359"/>
    </location>
</feature>
<feature type="region of interest" description="Disordered" evidence="3">
    <location>
        <begin position="329"/>
        <end position="359"/>
    </location>
</feature>
<feature type="glycosylation site" description="N-linked (GlcNAc...) asparagine" evidence="6">
    <location>
        <position position="5"/>
    </location>
</feature>
<feature type="glycosylation site" description="N-linked (GlcNAc...) asparagine" evidence="6">
    <location>
        <position position="11"/>
    </location>
</feature>
<feature type="mutagenesis site" description="Loss of protein expression at the cell surface." evidence="7">
    <original>Y</original>
    <variation>C</variation>
    <location>
        <position position="30"/>
    </location>
</feature>
<feature type="mutagenesis site" description="Loss of protein expression at the cell surface." evidence="7">
    <original>L</original>
    <variation>F</variation>
    <location>
        <position position="163"/>
    </location>
</feature>
<feature type="mutagenesis site" description="Loss of protein expression at the cell surface." evidence="7">
    <original>T</original>
    <variation>I</variation>
    <location>
        <position position="164"/>
    </location>
</feature>
<feature type="mutagenesis site" description="Loss of protein expression at the cell surface." evidence="7">
    <original>P</original>
    <variation>L</variation>
    <location>
        <position position="205"/>
    </location>
</feature>
<feature type="mutagenesis site" description="Loss of protein expression at the cell surface." evidence="7">
    <original>F</original>
    <variation>L</variation>
    <location>
        <position position="206"/>
    </location>
</feature>
<feature type="mutagenesis site" description="No effect on protein expression at the cell surface." evidence="7">
    <original>P</original>
    <variation>L</variation>
    <location>
        <position position="290"/>
    </location>
</feature>
<name>P2RY8_HUMAN</name>
<keyword id="KW-1003">Cell membrane</keyword>
<keyword id="KW-0297">G-protein coupled receptor</keyword>
<keyword id="KW-0325">Glycoprotein</keyword>
<keyword id="KW-0472">Membrane</keyword>
<keyword id="KW-1267">Proteomics identification</keyword>
<keyword id="KW-0675">Receptor</keyword>
<keyword id="KW-1185">Reference proteome</keyword>
<keyword id="KW-0807">Transducer</keyword>
<keyword id="KW-0812">Transmembrane</keyword>
<keyword id="KW-1133">Transmembrane helix</keyword>
<sequence length="359" mass="40635">MQVPNSTGPDNATLQMLRNPAIAVALPVVYSLVAAVSIPGNLFSLWVLCRRMGPRSPSVIFMINLSVTDLMLASVLPFQIYYHCNRHHWVFGVLLCNVVTVAFYANMYSSILTMTCISVERFLGVLYPLSSKRWRRRRYAVAACAGTWLLLLTALSPLARTDLTYPVHALGIITCFDVLKWTMLPSVAMWAVFLFTIFILLFLIPFVITVACYTATILKLLRTEEAHGREQRRRAVGLAAVVLLAFVTCFAPNNFVLLAHIVSRLFYGKSYYHVYKLTLCLSCLNNCLDPFVYYFASREFQLRLREYLGCRRVPRDTLDTRRESLFSARTTSVRSEAGAHPEGMEGATRPGLQRQESVF</sequence>
<protein>
    <recommendedName>
        <fullName evidence="11">S-geranylgeranyl-glutathione receptor P2RY8</fullName>
    </recommendedName>
    <alternativeName>
        <fullName evidence="10">P2Y purinoceptor 8</fullName>
        <shortName evidence="10">P2Y8</shortName>
    </alternativeName>
</protein>
<proteinExistence type="evidence at protein level"/>
<evidence type="ECO:0000255" key="1"/>
<evidence type="ECO:0000255" key="2">
    <source>
        <dbReference type="PROSITE-ProRule" id="PRU00521"/>
    </source>
</evidence>
<evidence type="ECO:0000256" key="3">
    <source>
        <dbReference type="SAM" id="MobiDB-lite"/>
    </source>
</evidence>
<evidence type="ECO:0000269" key="4">
    <source>
    </source>
</evidence>
<evidence type="ECO:0000269" key="5">
    <source>
    </source>
</evidence>
<evidence type="ECO:0000269" key="6">
    <source>
    </source>
</evidence>
<evidence type="ECO:0000269" key="7">
    <source>
    </source>
</evidence>
<evidence type="ECO:0000269" key="8">
    <source>
    </source>
</evidence>
<evidence type="ECO:0000269" key="9">
    <source>
    </source>
</evidence>
<evidence type="ECO:0000303" key="10">
    <source>
    </source>
</evidence>
<evidence type="ECO:0000303" key="11">
    <source>
    </source>
</evidence>
<evidence type="ECO:0000312" key="12">
    <source>
        <dbReference type="HGNC" id="HGNC:15524"/>
    </source>
</evidence>
<reference key="1">
    <citation type="journal article" date="2005" name="Nature">
        <title>The DNA sequence of the human X chromosome.</title>
        <authorList>
            <person name="Ross M.T."/>
            <person name="Grafham D.V."/>
            <person name="Coffey A.J."/>
            <person name="Scherer S."/>
            <person name="McLay K."/>
            <person name="Muzny D."/>
            <person name="Platzer M."/>
            <person name="Howell G.R."/>
            <person name="Burrows C."/>
            <person name="Bird C.P."/>
            <person name="Frankish A."/>
            <person name="Lovell F.L."/>
            <person name="Howe K.L."/>
            <person name="Ashurst J.L."/>
            <person name="Fulton R.S."/>
            <person name="Sudbrak R."/>
            <person name="Wen G."/>
            <person name="Jones M.C."/>
            <person name="Hurles M.E."/>
            <person name="Andrews T.D."/>
            <person name="Scott C.E."/>
            <person name="Searle S."/>
            <person name="Ramser J."/>
            <person name="Whittaker A."/>
            <person name="Deadman R."/>
            <person name="Carter N.P."/>
            <person name="Hunt S.E."/>
            <person name="Chen R."/>
            <person name="Cree A."/>
            <person name="Gunaratne P."/>
            <person name="Havlak P."/>
            <person name="Hodgson A."/>
            <person name="Metzker M.L."/>
            <person name="Richards S."/>
            <person name="Scott G."/>
            <person name="Steffen D."/>
            <person name="Sodergren E."/>
            <person name="Wheeler D.A."/>
            <person name="Worley K.C."/>
            <person name="Ainscough R."/>
            <person name="Ambrose K.D."/>
            <person name="Ansari-Lari M.A."/>
            <person name="Aradhya S."/>
            <person name="Ashwell R.I."/>
            <person name="Babbage A.K."/>
            <person name="Bagguley C.L."/>
            <person name="Ballabio A."/>
            <person name="Banerjee R."/>
            <person name="Barker G.E."/>
            <person name="Barlow K.F."/>
            <person name="Barrett I.P."/>
            <person name="Bates K.N."/>
            <person name="Beare D.M."/>
            <person name="Beasley H."/>
            <person name="Beasley O."/>
            <person name="Beck A."/>
            <person name="Bethel G."/>
            <person name="Blechschmidt K."/>
            <person name="Brady N."/>
            <person name="Bray-Allen S."/>
            <person name="Bridgeman A.M."/>
            <person name="Brown A.J."/>
            <person name="Brown M.J."/>
            <person name="Bonnin D."/>
            <person name="Bruford E.A."/>
            <person name="Buhay C."/>
            <person name="Burch P."/>
            <person name="Burford D."/>
            <person name="Burgess J."/>
            <person name="Burrill W."/>
            <person name="Burton J."/>
            <person name="Bye J.M."/>
            <person name="Carder C."/>
            <person name="Carrel L."/>
            <person name="Chako J."/>
            <person name="Chapman J.C."/>
            <person name="Chavez D."/>
            <person name="Chen E."/>
            <person name="Chen G."/>
            <person name="Chen Y."/>
            <person name="Chen Z."/>
            <person name="Chinault C."/>
            <person name="Ciccodicola A."/>
            <person name="Clark S.Y."/>
            <person name="Clarke G."/>
            <person name="Clee C.M."/>
            <person name="Clegg S."/>
            <person name="Clerc-Blankenburg K."/>
            <person name="Clifford K."/>
            <person name="Cobley V."/>
            <person name="Cole C.G."/>
            <person name="Conquer J.S."/>
            <person name="Corby N."/>
            <person name="Connor R.E."/>
            <person name="David R."/>
            <person name="Davies J."/>
            <person name="Davis C."/>
            <person name="Davis J."/>
            <person name="Delgado O."/>
            <person name="Deshazo D."/>
            <person name="Dhami P."/>
            <person name="Ding Y."/>
            <person name="Dinh H."/>
            <person name="Dodsworth S."/>
            <person name="Draper H."/>
            <person name="Dugan-Rocha S."/>
            <person name="Dunham A."/>
            <person name="Dunn M."/>
            <person name="Durbin K.J."/>
            <person name="Dutta I."/>
            <person name="Eades T."/>
            <person name="Ellwood M."/>
            <person name="Emery-Cohen A."/>
            <person name="Errington H."/>
            <person name="Evans K.L."/>
            <person name="Faulkner L."/>
            <person name="Francis F."/>
            <person name="Frankland J."/>
            <person name="Fraser A.E."/>
            <person name="Galgoczy P."/>
            <person name="Gilbert J."/>
            <person name="Gill R."/>
            <person name="Gloeckner G."/>
            <person name="Gregory S.G."/>
            <person name="Gribble S."/>
            <person name="Griffiths C."/>
            <person name="Grocock R."/>
            <person name="Gu Y."/>
            <person name="Gwilliam R."/>
            <person name="Hamilton C."/>
            <person name="Hart E.A."/>
            <person name="Hawes A."/>
            <person name="Heath P.D."/>
            <person name="Heitmann K."/>
            <person name="Hennig S."/>
            <person name="Hernandez J."/>
            <person name="Hinzmann B."/>
            <person name="Ho S."/>
            <person name="Hoffs M."/>
            <person name="Howden P.J."/>
            <person name="Huckle E.J."/>
            <person name="Hume J."/>
            <person name="Hunt P.J."/>
            <person name="Hunt A.R."/>
            <person name="Isherwood J."/>
            <person name="Jacob L."/>
            <person name="Johnson D."/>
            <person name="Jones S."/>
            <person name="de Jong P.J."/>
            <person name="Joseph S.S."/>
            <person name="Keenan S."/>
            <person name="Kelly S."/>
            <person name="Kershaw J.K."/>
            <person name="Khan Z."/>
            <person name="Kioschis P."/>
            <person name="Klages S."/>
            <person name="Knights A.J."/>
            <person name="Kosiura A."/>
            <person name="Kovar-Smith C."/>
            <person name="Laird G.K."/>
            <person name="Langford C."/>
            <person name="Lawlor S."/>
            <person name="Leversha M."/>
            <person name="Lewis L."/>
            <person name="Liu W."/>
            <person name="Lloyd C."/>
            <person name="Lloyd D.M."/>
            <person name="Loulseged H."/>
            <person name="Loveland J.E."/>
            <person name="Lovell J.D."/>
            <person name="Lozado R."/>
            <person name="Lu J."/>
            <person name="Lyne R."/>
            <person name="Ma J."/>
            <person name="Maheshwari M."/>
            <person name="Matthews L.H."/>
            <person name="McDowall J."/>
            <person name="McLaren S."/>
            <person name="McMurray A."/>
            <person name="Meidl P."/>
            <person name="Meitinger T."/>
            <person name="Milne S."/>
            <person name="Miner G."/>
            <person name="Mistry S.L."/>
            <person name="Morgan M."/>
            <person name="Morris S."/>
            <person name="Mueller I."/>
            <person name="Mullikin J.C."/>
            <person name="Nguyen N."/>
            <person name="Nordsiek G."/>
            <person name="Nyakatura G."/>
            <person name="O'dell C.N."/>
            <person name="Okwuonu G."/>
            <person name="Palmer S."/>
            <person name="Pandian R."/>
            <person name="Parker D."/>
            <person name="Parrish J."/>
            <person name="Pasternak S."/>
            <person name="Patel D."/>
            <person name="Pearce A.V."/>
            <person name="Pearson D.M."/>
            <person name="Pelan S.E."/>
            <person name="Perez L."/>
            <person name="Porter K.M."/>
            <person name="Ramsey Y."/>
            <person name="Reichwald K."/>
            <person name="Rhodes S."/>
            <person name="Ridler K.A."/>
            <person name="Schlessinger D."/>
            <person name="Schueler M.G."/>
            <person name="Sehra H.K."/>
            <person name="Shaw-Smith C."/>
            <person name="Shen H."/>
            <person name="Sheridan E.M."/>
            <person name="Shownkeen R."/>
            <person name="Skuce C.D."/>
            <person name="Smith M.L."/>
            <person name="Sotheran E.C."/>
            <person name="Steingruber H.E."/>
            <person name="Steward C.A."/>
            <person name="Storey R."/>
            <person name="Swann R.M."/>
            <person name="Swarbreck D."/>
            <person name="Tabor P.E."/>
            <person name="Taudien S."/>
            <person name="Taylor T."/>
            <person name="Teague B."/>
            <person name="Thomas K."/>
            <person name="Thorpe A."/>
            <person name="Timms K."/>
            <person name="Tracey A."/>
            <person name="Trevanion S."/>
            <person name="Tromans A.C."/>
            <person name="d'Urso M."/>
            <person name="Verduzco D."/>
            <person name="Villasana D."/>
            <person name="Waldron L."/>
            <person name="Wall M."/>
            <person name="Wang Q."/>
            <person name="Warren J."/>
            <person name="Warry G.L."/>
            <person name="Wei X."/>
            <person name="West A."/>
            <person name="Whitehead S.L."/>
            <person name="Whiteley M.N."/>
            <person name="Wilkinson J.E."/>
            <person name="Willey D.L."/>
            <person name="Williams G."/>
            <person name="Williams L."/>
            <person name="Williamson A."/>
            <person name="Williamson H."/>
            <person name="Wilming L."/>
            <person name="Woodmansey R.L."/>
            <person name="Wray P.W."/>
            <person name="Yen J."/>
            <person name="Zhang J."/>
            <person name="Zhou J."/>
            <person name="Zoghbi H."/>
            <person name="Zorilla S."/>
            <person name="Buck D."/>
            <person name="Reinhardt R."/>
            <person name="Poustka A."/>
            <person name="Rosenthal A."/>
            <person name="Lehrach H."/>
            <person name="Meindl A."/>
            <person name="Minx P.J."/>
            <person name="Hillier L.W."/>
            <person name="Willard H.F."/>
            <person name="Wilson R.K."/>
            <person name="Waterston R.H."/>
            <person name="Rice C.M."/>
            <person name="Vaudin M."/>
            <person name="Coulson A."/>
            <person name="Nelson D.L."/>
            <person name="Weinstock G."/>
            <person name="Sulston J.E."/>
            <person name="Durbin R.M."/>
            <person name="Hubbard T."/>
            <person name="Gibbs R.A."/>
            <person name="Beck S."/>
            <person name="Rogers J."/>
            <person name="Bentley D.R."/>
        </authorList>
    </citation>
    <scope>NUCLEOTIDE SEQUENCE [LARGE SCALE GENOMIC DNA]</scope>
</reference>
<reference key="2">
    <citation type="journal article" date="2004" name="Genome Res.">
        <title>The status, quality, and expansion of the NIH full-length cDNA project: the Mammalian Gene Collection (MGC).</title>
        <authorList>
            <consortium name="The MGC Project Team"/>
        </authorList>
    </citation>
    <scope>NUCLEOTIDE SEQUENCE [LARGE SCALE MRNA]</scope>
    <source>
        <tissue>Lymph</tissue>
    </source>
</reference>
<reference key="3">
    <citation type="journal article" date="2000" name="Biochim. Biophys. Acta">
        <title>Expression of purinergic receptors (ionotropic P2X1-7 and metabotropic P2Y1-11) during myeloid differentiation of HL60 cells.</title>
        <authorList>
            <person name="Adrian K."/>
            <person name="Bernhard M.K."/>
            <person name="Breitinger H.-G."/>
            <person name="Ogilvie A."/>
        </authorList>
    </citation>
    <scope>TISSUE SPECIFICITY</scope>
    <scope>INDUCTION</scope>
</reference>
<reference key="4">
    <citation type="journal article" date="2004" name="J. Med. Genet.">
        <title>Disruption of a new X linked gene highly expressed in brain in a family with two mentally retarded males.</title>
        <authorList>
            <person name="Cantagrel V."/>
            <person name="Lossi A.-M."/>
            <person name="Boulanger S."/>
            <person name="Depetris D."/>
            <person name="Mattei M.-G."/>
            <person name="Gecz J."/>
            <person name="Schwartz C.E."/>
            <person name="Van Maldergem L."/>
            <person name="Villard L."/>
        </authorList>
    </citation>
    <scope>TISSUE SPECIFICITY</scope>
</reference>
<reference key="5">
    <citation type="journal article" date="2009" name="Nat. Biotechnol.">
        <title>Mass-spectrometric identification and relative quantification of N-linked cell surface glycoproteins.</title>
        <authorList>
            <person name="Wollscheid B."/>
            <person name="Bausch-Fluck D."/>
            <person name="Henderson C."/>
            <person name="O'Brien R."/>
            <person name="Bibel M."/>
            <person name="Schiess R."/>
            <person name="Aebersold R."/>
            <person name="Watts J.D."/>
        </authorList>
    </citation>
    <scope>GLYCOSYLATION [LARGE SCALE ANALYSIS] AT ASN-5 AND ASN-11</scope>
    <source>
        <tissue>Leukemic T-cell</tissue>
    </source>
</reference>
<reference key="6">
    <citation type="journal article" date="2014" name="Nature">
        <title>Loss of signalling via Galpha13 in germinal centre B-cell-derived lymphoma.</title>
        <authorList>
            <person name="Muppidi J.R."/>
            <person name="Schmitz R."/>
            <person name="Green J.A."/>
            <person name="Xiao W."/>
            <person name="Larsen A.B."/>
            <person name="Braun S.E."/>
            <person name="An J."/>
            <person name="Xu Y."/>
            <person name="Rosenwald A."/>
            <person name="Ott G."/>
            <person name="Gascoyne R.D."/>
            <person name="Rimsza L.M."/>
            <person name="Campo E."/>
            <person name="Jaffe E.S."/>
            <person name="Delabie J."/>
            <person name="Smeland E.B."/>
            <person name="Braziel R.M."/>
            <person name="Tubbs R.R."/>
            <person name="Cook J.R."/>
            <person name="Weisenburger D.D."/>
            <person name="Chan W.C."/>
            <person name="Vaidehi N."/>
            <person name="Staudt L.M."/>
            <person name="Cyster J.G."/>
        </authorList>
    </citation>
    <scope>FUNCTION</scope>
    <scope>SUBCELLULAR LOCATION</scope>
    <scope>MUTAGENESIS OF TYR-30; LEU-163; THR-164; PRO-205; PHE-206 AND PRO-290</scope>
</reference>
<reference key="7">
    <citation type="journal article" date="2019" name="Nature">
        <title>S-Geranylgeranyl-L-glutathione is a ligand for human B cell-confinement receptor P2RY8.</title>
        <authorList>
            <person name="Lu E."/>
            <person name="Wolfreys F.D."/>
            <person name="Muppidi J.R."/>
            <person name="Xu Y."/>
            <person name="Cyster J.G."/>
        </authorList>
    </citation>
    <scope>FUNCTION</scope>
    <scope>TISSUE SPECIFICITY</scope>
</reference>
<reference key="8">
    <citation type="journal article" date="2021" name="Sci. Immunol.">
        <title>Abcc1 and Ggt5 support lymphocyte guidance through export and catabolism of S-geranylgeranyl-l-glutathione.</title>
        <authorList>
            <person name="Gallman A.E."/>
            <person name="Wolfreys F.D."/>
            <person name="Nguyen D.N."/>
            <person name="Sandy M."/>
            <person name="Xu Y."/>
            <person name="An J."/>
            <person name="Li Z."/>
            <person name="Marson A."/>
            <person name="Lu E."/>
            <person name="Cyster J.G."/>
        </authorList>
    </citation>
    <scope>FUNCTION</scope>
</reference>
<accession>Q86VZ1</accession>
<dbReference type="EMBL" id="AL683870">
    <property type="status" value="NOT_ANNOTATED_CDS"/>
    <property type="molecule type" value="Genomic_DNA"/>
</dbReference>
<dbReference type="EMBL" id="BC043610">
    <property type="protein sequence ID" value="AAH43610.1"/>
    <property type="molecule type" value="mRNA"/>
</dbReference>
<dbReference type="CCDS" id="CCDS14115.1"/>
<dbReference type="RefSeq" id="NP_001411115.1">
    <property type="nucleotide sequence ID" value="NM_001424186.1"/>
</dbReference>
<dbReference type="RefSeq" id="NP_001411116.1">
    <property type="nucleotide sequence ID" value="NM_001424187.1"/>
</dbReference>
<dbReference type="RefSeq" id="NP_001411117.1">
    <property type="nucleotide sequence ID" value="NM_001424188.1"/>
</dbReference>
<dbReference type="RefSeq" id="NP_001411118.1">
    <property type="nucleotide sequence ID" value="NM_001424189.1"/>
</dbReference>
<dbReference type="RefSeq" id="NP_001411119.1">
    <property type="nucleotide sequence ID" value="NM_001424190.1"/>
</dbReference>
<dbReference type="RefSeq" id="NP_001411120.1">
    <property type="nucleotide sequence ID" value="NM_001424191.1"/>
</dbReference>
<dbReference type="RefSeq" id="NP_001411121.1">
    <property type="nucleotide sequence ID" value="NM_001424192.1"/>
</dbReference>
<dbReference type="RefSeq" id="NP_835230.1">
    <property type="nucleotide sequence ID" value="NM_178129.5"/>
</dbReference>
<dbReference type="RefSeq" id="XP_005274486.1">
    <property type="nucleotide sequence ID" value="XM_005274429.4"/>
</dbReference>
<dbReference type="RefSeq" id="XP_005274835.1">
    <property type="nucleotide sequence ID" value="XM_005274778.4"/>
</dbReference>
<dbReference type="RefSeq" id="XP_011543933.1">
    <property type="nucleotide sequence ID" value="XM_011545631.2"/>
</dbReference>
<dbReference type="RefSeq" id="XP_011543934.1">
    <property type="nucleotide sequence ID" value="XM_011545632.2"/>
</dbReference>
<dbReference type="RefSeq" id="XP_011544480.1">
    <property type="nucleotide sequence ID" value="XM_011546178.2"/>
</dbReference>
<dbReference type="RefSeq" id="XP_011544481.1">
    <property type="nucleotide sequence ID" value="XM_011546179.2"/>
</dbReference>
<dbReference type="RefSeq" id="XP_054184255.1">
    <property type="nucleotide sequence ID" value="XM_054328280.1"/>
</dbReference>
<dbReference type="SMR" id="Q86VZ1"/>
<dbReference type="BioGRID" id="130402">
    <property type="interactions" value="211"/>
</dbReference>
<dbReference type="FunCoup" id="Q86VZ1">
    <property type="interactions" value="588"/>
</dbReference>
<dbReference type="IntAct" id="Q86VZ1">
    <property type="interactions" value="173"/>
</dbReference>
<dbReference type="STRING" id="9606.ENSP00000370697"/>
<dbReference type="ChEMBL" id="CHEMBL4523886"/>
<dbReference type="DrugBank" id="DB01069">
    <property type="generic name" value="Promethazine"/>
</dbReference>
<dbReference type="GlyCosmos" id="Q86VZ1">
    <property type="glycosylation" value="2 sites, No reported glycans"/>
</dbReference>
<dbReference type="GlyGen" id="Q86VZ1">
    <property type="glycosylation" value="2 sites, 1 N-linked glycan (1 site)"/>
</dbReference>
<dbReference type="iPTMnet" id="Q86VZ1"/>
<dbReference type="PhosphoSitePlus" id="Q86VZ1"/>
<dbReference type="BioMuta" id="P2RY8"/>
<dbReference type="DMDM" id="74762454"/>
<dbReference type="MassIVE" id="Q86VZ1"/>
<dbReference type="PaxDb" id="9606-ENSP00000370697"/>
<dbReference type="PeptideAtlas" id="Q86VZ1"/>
<dbReference type="ProteomicsDB" id="70092"/>
<dbReference type="Antibodypedia" id="588">
    <property type="antibodies" value="214 antibodies from 29 providers"/>
</dbReference>
<dbReference type="DNASU" id="286530"/>
<dbReference type="Ensembl" id="ENST00000381297.10">
    <property type="protein sequence ID" value="ENSP00000370697.4"/>
    <property type="gene ID" value="ENSG00000182162.11"/>
</dbReference>
<dbReference type="Ensembl" id="ENST00000711216.1">
    <property type="protein sequence ID" value="ENSP00000518611.1"/>
    <property type="gene ID" value="ENSG00000292333.1"/>
</dbReference>
<dbReference type="GeneID" id="286530"/>
<dbReference type="KEGG" id="hsa:286530"/>
<dbReference type="MANE-Select" id="ENST00000381297.10">
    <property type="protein sequence ID" value="ENSP00000370697.4"/>
    <property type="RefSeq nucleotide sequence ID" value="NM_178129.5"/>
    <property type="RefSeq protein sequence ID" value="NP_835230.1"/>
</dbReference>
<dbReference type="UCSC" id="uc004cpz.3">
    <property type="organism name" value="human"/>
</dbReference>
<dbReference type="AGR" id="HGNC:15524"/>
<dbReference type="CTD" id="286530"/>
<dbReference type="DisGeNET" id="286530"/>
<dbReference type="GeneCards" id="P2RY8"/>
<dbReference type="HGNC" id="HGNC:15524">
    <property type="gene designation" value="P2RY8"/>
</dbReference>
<dbReference type="HPA" id="ENSG00000182162">
    <property type="expression patterns" value="Group enriched (bone marrow, lymphoid tissue)"/>
</dbReference>
<dbReference type="MalaCards" id="P2RY8"/>
<dbReference type="MIM" id="300525">
    <property type="type" value="gene"/>
</dbReference>
<dbReference type="neXtProt" id="NX_Q86VZ1"/>
<dbReference type="OpenTargets" id="ENSG00000182162"/>
<dbReference type="PharmGKB" id="PA32873"/>
<dbReference type="VEuPathDB" id="HostDB:ENSG00000182162"/>
<dbReference type="eggNOG" id="ENOG502QW5Q">
    <property type="taxonomic scope" value="Eukaryota"/>
</dbReference>
<dbReference type="GeneTree" id="ENSGT01050000244840"/>
<dbReference type="HOGENOM" id="CLU_009579_8_2_1"/>
<dbReference type="InParanoid" id="Q86VZ1"/>
<dbReference type="OMA" id="CVTTFCY"/>
<dbReference type="OrthoDB" id="9944627at2759"/>
<dbReference type="PAN-GO" id="Q86VZ1">
    <property type="GO annotations" value="4 GO annotations based on evolutionary models"/>
</dbReference>
<dbReference type="PhylomeDB" id="Q86VZ1"/>
<dbReference type="TreeFam" id="TF330775"/>
<dbReference type="PathwayCommons" id="Q86VZ1"/>
<dbReference type="SignaLink" id="Q86VZ1"/>
<dbReference type="BioGRID-ORCS" id="286530">
    <property type="hits" value="12 hits in 604 CRISPR screens"/>
</dbReference>
<dbReference type="ChiTaRS" id="P2RY8">
    <property type="organism name" value="human"/>
</dbReference>
<dbReference type="GeneWiki" id="P2RY8"/>
<dbReference type="GenomeRNAi" id="286530"/>
<dbReference type="Pharos" id="Q86VZ1">
    <property type="development level" value="Tbio"/>
</dbReference>
<dbReference type="PRO" id="PR:Q86VZ1"/>
<dbReference type="Proteomes" id="UP000005640">
    <property type="component" value="Chromosome X"/>
</dbReference>
<dbReference type="Proteomes" id="UP000005640">
    <property type="component" value="Chromosome Y"/>
</dbReference>
<dbReference type="RNAct" id="Q86VZ1">
    <property type="molecule type" value="protein"/>
</dbReference>
<dbReference type="Bgee" id="ENSG00000182162">
    <property type="expression patterns" value="Expressed in buccal mucosa cell and 118 other cell types or tissues"/>
</dbReference>
<dbReference type="ExpressionAtlas" id="Q86VZ1">
    <property type="expression patterns" value="baseline and differential"/>
</dbReference>
<dbReference type="GO" id="GO:0005886">
    <property type="term" value="C:plasma membrane"/>
    <property type="evidence" value="ECO:0000314"/>
    <property type="project" value="UniProtKB"/>
</dbReference>
<dbReference type="GO" id="GO:0045028">
    <property type="term" value="F:G protein-coupled purinergic nucleotide receptor activity"/>
    <property type="evidence" value="ECO:0007669"/>
    <property type="project" value="InterPro"/>
</dbReference>
<dbReference type="GO" id="GO:0004930">
    <property type="term" value="F:G protein-coupled receptor activity"/>
    <property type="evidence" value="ECO:0000314"/>
    <property type="project" value="UniProtKB"/>
</dbReference>
<dbReference type="GO" id="GO:0007186">
    <property type="term" value="P:G protein-coupled receptor signaling pathway"/>
    <property type="evidence" value="ECO:0000318"/>
    <property type="project" value="GO_Central"/>
</dbReference>
<dbReference type="GO" id="GO:0160221">
    <property type="term" value="P:Rho-activating G protein-coupled receptor signaling pathway"/>
    <property type="evidence" value="ECO:0000314"/>
    <property type="project" value="UniProtKB"/>
</dbReference>
<dbReference type="CDD" id="cd15368">
    <property type="entry name" value="7tmA_P2Y8"/>
    <property type="match status" value="1"/>
</dbReference>
<dbReference type="FunFam" id="1.20.1070.10:FF:000040">
    <property type="entry name" value="Coagulation factor 2 (thrombin) receptor"/>
    <property type="match status" value="1"/>
</dbReference>
<dbReference type="Gene3D" id="1.20.1070.10">
    <property type="entry name" value="Rhodopsin 7-helix transmembrane proteins"/>
    <property type="match status" value="1"/>
</dbReference>
<dbReference type="InterPro" id="IPR000276">
    <property type="entry name" value="GPCR_Rhodpsn"/>
</dbReference>
<dbReference type="InterPro" id="IPR017452">
    <property type="entry name" value="GPCR_Rhodpsn_7TM"/>
</dbReference>
<dbReference type="InterPro" id="IPR027669">
    <property type="entry name" value="P2Y8_rcpt"/>
</dbReference>
<dbReference type="PANTHER" id="PTHR24232">
    <property type="entry name" value="G-PROTEIN COUPLED RECEPTOR"/>
    <property type="match status" value="1"/>
</dbReference>
<dbReference type="PANTHER" id="PTHR24232:SF25">
    <property type="entry name" value="P2Y PURINOCEPTOR 8"/>
    <property type="match status" value="1"/>
</dbReference>
<dbReference type="Pfam" id="PF00001">
    <property type="entry name" value="7tm_1"/>
    <property type="match status" value="1"/>
</dbReference>
<dbReference type="PRINTS" id="PR00237">
    <property type="entry name" value="GPCRRHODOPSN"/>
</dbReference>
<dbReference type="PRINTS" id="PR01157">
    <property type="entry name" value="P2YPURNOCPTR"/>
</dbReference>
<dbReference type="SUPFAM" id="SSF81321">
    <property type="entry name" value="Family A G protein-coupled receptor-like"/>
    <property type="match status" value="1"/>
</dbReference>
<dbReference type="PROSITE" id="PS00237">
    <property type="entry name" value="G_PROTEIN_RECEP_F1_1"/>
    <property type="match status" value="1"/>
</dbReference>
<dbReference type="PROSITE" id="PS50262">
    <property type="entry name" value="G_PROTEIN_RECEP_F1_2"/>
    <property type="match status" value="1"/>
</dbReference>
<organism>
    <name type="scientific">Homo sapiens</name>
    <name type="common">Human</name>
    <dbReference type="NCBI Taxonomy" id="9606"/>
    <lineage>
        <taxon>Eukaryota</taxon>
        <taxon>Metazoa</taxon>
        <taxon>Chordata</taxon>
        <taxon>Craniata</taxon>
        <taxon>Vertebrata</taxon>
        <taxon>Euteleostomi</taxon>
        <taxon>Mammalia</taxon>
        <taxon>Eutheria</taxon>
        <taxon>Euarchontoglires</taxon>
        <taxon>Primates</taxon>
        <taxon>Haplorrhini</taxon>
        <taxon>Catarrhini</taxon>
        <taxon>Hominidae</taxon>
        <taxon>Homo</taxon>
    </lineage>
</organism>
<gene>
    <name evidence="11 12" type="primary">P2RY8</name>
</gene>